<comment type="function">
    <text evidence="1">Involved in the heme biosynthesis. Catalyzes the aerobic oxidative decarboxylation of propionate groups of rings A and B of coproporphyrinogen-III to yield the vinyl groups in protoporphyrinogen-IX.</text>
</comment>
<comment type="catalytic activity">
    <reaction evidence="1">
        <text>coproporphyrinogen III + O2 + 2 H(+) = protoporphyrinogen IX + 2 CO2 + 2 H2O</text>
        <dbReference type="Rhea" id="RHEA:18257"/>
        <dbReference type="ChEBI" id="CHEBI:15377"/>
        <dbReference type="ChEBI" id="CHEBI:15378"/>
        <dbReference type="ChEBI" id="CHEBI:15379"/>
        <dbReference type="ChEBI" id="CHEBI:16526"/>
        <dbReference type="ChEBI" id="CHEBI:57307"/>
        <dbReference type="ChEBI" id="CHEBI:57309"/>
        <dbReference type="EC" id="1.3.3.3"/>
    </reaction>
</comment>
<comment type="cofactor">
    <cofactor evidence="1">
        <name>a divalent metal cation</name>
        <dbReference type="ChEBI" id="CHEBI:60240"/>
    </cofactor>
</comment>
<comment type="pathway">
    <text evidence="1">Porphyrin-containing compound metabolism; protoporphyrin-IX biosynthesis; protoporphyrinogen-IX from coproporphyrinogen-III (O2 route): step 1/1.</text>
</comment>
<comment type="subunit">
    <text evidence="1">Homodimer.</text>
</comment>
<comment type="subcellular location">
    <subcellularLocation>
        <location evidence="1">Cytoplasm</location>
    </subcellularLocation>
</comment>
<comment type="similarity">
    <text evidence="1">Belongs to the aerobic coproporphyrinogen-III oxidase family.</text>
</comment>
<name>HEM6_XYLFT</name>
<feature type="chain" id="PRO_0000109934" description="Oxygen-dependent coproporphyrinogen-III oxidase">
    <location>
        <begin position="1"/>
        <end position="305"/>
    </location>
</feature>
<feature type="region of interest" description="Important for dimerization" evidence="1">
    <location>
        <begin position="239"/>
        <end position="274"/>
    </location>
</feature>
<feature type="active site" description="Proton donor" evidence="1">
    <location>
        <position position="106"/>
    </location>
</feature>
<feature type="binding site" evidence="1">
    <location>
        <position position="92"/>
    </location>
    <ligand>
        <name>substrate</name>
    </ligand>
</feature>
<feature type="binding site" evidence="1">
    <location>
        <position position="96"/>
    </location>
    <ligand>
        <name>a divalent metal cation</name>
        <dbReference type="ChEBI" id="CHEBI:60240"/>
    </ligand>
</feature>
<feature type="binding site" evidence="1">
    <location>
        <position position="106"/>
    </location>
    <ligand>
        <name>a divalent metal cation</name>
        <dbReference type="ChEBI" id="CHEBI:60240"/>
    </ligand>
</feature>
<feature type="binding site" evidence="1">
    <location>
        <begin position="108"/>
        <end position="110"/>
    </location>
    <ligand>
        <name>substrate</name>
    </ligand>
</feature>
<feature type="binding site" evidence="1">
    <location>
        <position position="145"/>
    </location>
    <ligand>
        <name>a divalent metal cation</name>
        <dbReference type="ChEBI" id="CHEBI:60240"/>
    </ligand>
</feature>
<feature type="binding site" evidence="1">
    <location>
        <position position="175"/>
    </location>
    <ligand>
        <name>a divalent metal cation</name>
        <dbReference type="ChEBI" id="CHEBI:60240"/>
    </ligand>
</feature>
<feature type="binding site" evidence="1">
    <location>
        <begin position="257"/>
        <end position="259"/>
    </location>
    <ligand>
        <name>substrate</name>
    </ligand>
</feature>
<feature type="site" description="Important for dimerization" evidence="1">
    <location>
        <position position="175"/>
    </location>
</feature>
<proteinExistence type="inferred from homology"/>
<reference key="1">
    <citation type="journal article" date="2003" name="J. Bacteriol.">
        <title>Comparative analyses of the complete genome sequences of Pierce's disease and citrus variegated chlorosis strains of Xylella fastidiosa.</title>
        <authorList>
            <person name="Van Sluys M.A."/>
            <person name="de Oliveira M.C."/>
            <person name="Monteiro-Vitorello C.B."/>
            <person name="Miyaki C.Y."/>
            <person name="Furlan L.R."/>
            <person name="Camargo L.E.A."/>
            <person name="da Silva A.C.R."/>
            <person name="Moon D.H."/>
            <person name="Takita M.A."/>
            <person name="Lemos E.G.M."/>
            <person name="Machado M.A."/>
            <person name="Ferro M.I.T."/>
            <person name="da Silva F.R."/>
            <person name="Goldman M.H.S."/>
            <person name="Goldman G.H."/>
            <person name="Lemos M.V.F."/>
            <person name="El-Dorry H."/>
            <person name="Tsai S.M."/>
            <person name="Carrer H."/>
            <person name="Carraro D.M."/>
            <person name="de Oliveira R.C."/>
            <person name="Nunes L.R."/>
            <person name="Siqueira W.J."/>
            <person name="Coutinho L.L."/>
            <person name="Kimura E.T."/>
            <person name="Ferro E.S."/>
            <person name="Harakava R."/>
            <person name="Kuramae E.E."/>
            <person name="Marino C.L."/>
            <person name="Giglioti E."/>
            <person name="Abreu I.L."/>
            <person name="Alves L.M.C."/>
            <person name="do Amaral A.M."/>
            <person name="Baia G.S."/>
            <person name="Blanco S.R."/>
            <person name="Brito M.S."/>
            <person name="Cannavan F.S."/>
            <person name="Celestino A.V."/>
            <person name="da Cunha A.F."/>
            <person name="Fenille R.C."/>
            <person name="Ferro J.A."/>
            <person name="Formighieri E.F."/>
            <person name="Kishi L.T."/>
            <person name="Leoni S.G."/>
            <person name="Oliveira A.R."/>
            <person name="Rosa V.E. Jr."/>
            <person name="Sassaki F.T."/>
            <person name="Sena J.A.D."/>
            <person name="de Souza A.A."/>
            <person name="Truffi D."/>
            <person name="Tsukumo F."/>
            <person name="Yanai G.M."/>
            <person name="Zaros L.G."/>
            <person name="Civerolo E.L."/>
            <person name="Simpson A.J.G."/>
            <person name="Almeida N.F. Jr."/>
            <person name="Setubal J.C."/>
            <person name="Kitajima J.P."/>
        </authorList>
    </citation>
    <scope>NUCLEOTIDE SEQUENCE [LARGE SCALE GENOMIC DNA]</scope>
    <source>
        <strain>Temecula1 / ATCC 700964</strain>
    </source>
</reference>
<accession>Q87FB2</accession>
<gene>
    <name evidence="1" type="primary">hemF</name>
    <name type="ordered locus">PD_0015</name>
</gene>
<protein>
    <recommendedName>
        <fullName evidence="1">Oxygen-dependent coproporphyrinogen-III oxidase</fullName>
        <shortName evidence="1">CPO</shortName>
        <shortName evidence="1">Coprogen oxidase</shortName>
        <shortName evidence="1">Coproporphyrinogenase</shortName>
        <ecNumber evidence="1">1.3.3.3</ecNumber>
    </recommendedName>
</protein>
<organism>
    <name type="scientific">Xylella fastidiosa (strain Temecula1 / ATCC 700964)</name>
    <dbReference type="NCBI Taxonomy" id="183190"/>
    <lineage>
        <taxon>Bacteria</taxon>
        <taxon>Pseudomonadati</taxon>
        <taxon>Pseudomonadota</taxon>
        <taxon>Gammaproteobacteria</taxon>
        <taxon>Lysobacterales</taxon>
        <taxon>Lysobacteraceae</taxon>
        <taxon>Xylella</taxon>
    </lineage>
</organism>
<sequence>MSHFDRVRDYLTALQDRICNVVETIDGQSHFHQDHWQRTEGGGGRTRLLRDGAVFEQAAIGFSDVCGTHLPPSASVRRPELAGANWRACGVSLVFHPKNPFVPTTHLNVRYFRAEREGKQVAAWFGGGFDLTPFYPFDEDVVHWHTVARDLCAPFGDERYAAHKRWCDEYFVLRHRNETRGVGGLFFDDLDKDFERDFDYQRAVGDGFLDAYFPIVTRRHDTPYGDRERAFQLYRRGRYVEFNLLFDRGTLFGLQSGGRAESILISLPPLVRWEYGYHPLPGSAEARLADYLLPRDWLEESRICE</sequence>
<dbReference type="EC" id="1.3.3.3" evidence="1"/>
<dbReference type="EMBL" id="AE009442">
    <property type="protein sequence ID" value="AAO27923.1"/>
    <property type="molecule type" value="Genomic_DNA"/>
</dbReference>
<dbReference type="RefSeq" id="WP_011097474.1">
    <property type="nucleotide sequence ID" value="NC_004556.1"/>
</dbReference>
<dbReference type="SMR" id="Q87FB2"/>
<dbReference type="GeneID" id="93903705"/>
<dbReference type="KEGG" id="xft:PD_0015"/>
<dbReference type="HOGENOM" id="CLU_026169_0_1_6"/>
<dbReference type="UniPathway" id="UPA00251">
    <property type="reaction ID" value="UER00322"/>
</dbReference>
<dbReference type="Proteomes" id="UP000002516">
    <property type="component" value="Chromosome"/>
</dbReference>
<dbReference type="GO" id="GO:0005737">
    <property type="term" value="C:cytoplasm"/>
    <property type="evidence" value="ECO:0007669"/>
    <property type="project" value="UniProtKB-SubCell"/>
</dbReference>
<dbReference type="GO" id="GO:0004109">
    <property type="term" value="F:coproporphyrinogen oxidase activity"/>
    <property type="evidence" value="ECO:0007669"/>
    <property type="project" value="UniProtKB-UniRule"/>
</dbReference>
<dbReference type="GO" id="GO:0046872">
    <property type="term" value="F:metal ion binding"/>
    <property type="evidence" value="ECO:0007669"/>
    <property type="project" value="UniProtKB-KW"/>
</dbReference>
<dbReference type="GO" id="GO:0042803">
    <property type="term" value="F:protein homodimerization activity"/>
    <property type="evidence" value="ECO:0000250"/>
    <property type="project" value="UniProtKB"/>
</dbReference>
<dbReference type="GO" id="GO:0006782">
    <property type="term" value="P:protoporphyrinogen IX biosynthetic process"/>
    <property type="evidence" value="ECO:0007669"/>
    <property type="project" value="UniProtKB-UniRule"/>
</dbReference>
<dbReference type="FunFam" id="3.40.1500.10:FF:000001">
    <property type="entry name" value="Oxygen-dependent coproporphyrinogen-III oxidase"/>
    <property type="match status" value="1"/>
</dbReference>
<dbReference type="Gene3D" id="3.40.1500.10">
    <property type="entry name" value="Coproporphyrinogen III oxidase, aerobic"/>
    <property type="match status" value="1"/>
</dbReference>
<dbReference type="HAMAP" id="MF_00333">
    <property type="entry name" value="Coprogen_oxidas"/>
    <property type="match status" value="1"/>
</dbReference>
<dbReference type="InterPro" id="IPR001260">
    <property type="entry name" value="Coprogen_oxidase_aer"/>
</dbReference>
<dbReference type="InterPro" id="IPR036406">
    <property type="entry name" value="Coprogen_oxidase_aer_sf"/>
</dbReference>
<dbReference type="InterPro" id="IPR018375">
    <property type="entry name" value="Coprogen_oxidase_CS"/>
</dbReference>
<dbReference type="NCBIfam" id="NF003727">
    <property type="entry name" value="PRK05330.1"/>
    <property type="match status" value="1"/>
</dbReference>
<dbReference type="PANTHER" id="PTHR10755">
    <property type="entry name" value="COPROPORPHYRINOGEN III OXIDASE, MITOCHONDRIAL"/>
    <property type="match status" value="1"/>
</dbReference>
<dbReference type="PANTHER" id="PTHR10755:SF0">
    <property type="entry name" value="OXYGEN-DEPENDENT COPROPORPHYRINOGEN-III OXIDASE, MITOCHONDRIAL"/>
    <property type="match status" value="1"/>
</dbReference>
<dbReference type="Pfam" id="PF01218">
    <property type="entry name" value="Coprogen_oxidas"/>
    <property type="match status" value="1"/>
</dbReference>
<dbReference type="PIRSF" id="PIRSF000166">
    <property type="entry name" value="Coproporphyri_ox"/>
    <property type="match status" value="1"/>
</dbReference>
<dbReference type="PRINTS" id="PR00073">
    <property type="entry name" value="COPRGNOXDASE"/>
</dbReference>
<dbReference type="SUPFAM" id="SSF102886">
    <property type="entry name" value="Coproporphyrinogen III oxidase"/>
    <property type="match status" value="1"/>
</dbReference>
<dbReference type="PROSITE" id="PS01021">
    <property type="entry name" value="COPROGEN_OXIDASE"/>
    <property type="match status" value="1"/>
</dbReference>
<evidence type="ECO:0000255" key="1">
    <source>
        <dbReference type="HAMAP-Rule" id="MF_00333"/>
    </source>
</evidence>
<keyword id="KW-0963">Cytoplasm</keyword>
<keyword id="KW-0350">Heme biosynthesis</keyword>
<keyword id="KW-0479">Metal-binding</keyword>
<keyword id="KW-0560">Oxidoreductase</keyword>
<keyword id="KW-0627">Porphyrin biosynthesis</keyword>
<keyword id="KW-1185">Reference proteome</keyword>